<sequence>MASAVLSSVPTTASRFALLQVDSGSGSDSEPGKGKGRNTGKSQTNKSTTNEKKREKRRKKKEQQQSEANELRNLAFKKIPQKSSHAICNAQHELSLPNPVQKDSREENWQEWRQRDEQLTSEMFEADLEKALLLSKLEYEEHKKEYENAENASTQSKVMNKKDKRKTHQGKDKPLTISLKEFQSEDHISKKTEELSSQILSHDGGFFNRLEDDVHKILTREKRREQLTEYNGTDNYTVHEHNQEVVLKDGRIERLKLELERKDAEIQKLKNVIAQWEAKYKEVKARNAQLLKMLQEGEMKDKAEILLQVDESQSIKNELTIQVTSLHAALEQERSKVKVLQAELAKYQGGRKGKRNSESDQCR</sequence>
<name>GKAP1_BOVIN</name>
<protein>
    <recommendedName>
        <fullName>G kinase-anchoring protein 1</fullName>
    </recommendedName>
</protein>
<comment type="function">
    <text evidence="2">Regulates insulin-dependent IRS1 tyrosine phosphorylation in adipocytes by modulating the availability of IRS1 to IR tyrosine kinase. Its association with IRS1 is required for insulin-induced translocation of SLC2A4 to the cell membrane. Involved in TNF-induced impairment of insulin-dependent IRS1 tyrosine phosphorylation.</text>
</comment>
<comment type="subunit">
    <text evidence="2">Interacts with PRKG1 and IRS1.</text>
</comment>
<comment type="subcellular location">
    <subcellularLocation>
        <location evidence="2">Golgi apparatus</location>
    </subcellularLocation>
</comment>
<comment type="similarity">
    <text evidence="5">Belongs to the GKAP1 family.</text>
</comment>
<comment type="sequence caution" evidence="5">
    <conflict type="frameshift">
        <sequence resource="EMBL-CDS" id="AAI09626"/>
    </conflict>
</comment>
<evidence type="ECO:0000250" key="1">
    <source>
        <dbReference type="UniProtKB" id="Q5VSY0"/>
    </source>
</evidence>
<evidence type="ECO:0000250" key="2">
    <source>
        <dbReference type="UniProtKB" id="Q9JMB0"/>
    </source>
</evidence>
<evidence type="ECO:0000255" key="3"/>
<evidence type="ECO:0000256" key="4">
    <source>
        <dbReference type="SAM" id="MobiDB-lite"/>
    </source>
</evidence>
<evidence type="ECO:0000305" key="5"/>
<organism>
    <name type="scientific">Bos taurus</name>
    <name type="common">Bovine</name>
    <dbReference type="NCBI Taxonomy" id="9913"/>
    <lineage>
        <taxon>Eukaryota</taxon>
        <taxon>Metazoa</taxon>
        <taxon>Chordata</taxon>
        <taxon>Craniata</taxon>
        <taxon>Vertebrata</taxon>
        <taxon>Euteleostomi</taxon>
        <taxon>Mammalia</taxon>
        <taxon>Eutheria</taxon>
        <taxon>Laurasiatheria</taxon>
        <taxon>Artiodactyla</taxon>
        <taxon>Ruminantia</taxon>
        <taxon>Pecora</taxon>
        <taxon>Bovidae</taxon>
        <taxon>Bovinae</taxon>
        <taxon>Bos</taxon>
    </lineage>
</organism>
<feature type="chain" id="PRO_0000315653" description="G kinase-anchoring protein 1">
    <location>
        <begin position="1"/>
        <end position="363"/>
    </location>
</feature>
<feature type="region of interest" description="Interaction with IRS1" evidence="2">
    <location>
        <begin position="1"/>
        <end position="93"/>
    </location>
</feature>
<feature type="region of interest" description="Disordered" evidence="4">
    <location>
        <begin position="20"/>
        <end position="111"/>
    </location>
</feature>
<feature type="region of interest" description="Disordered" evidence="4">
    <location>
        <begin position="145"/>
        <end position="171"/>
    </location>
</feature>
<feature type="coiled-coil region" evidence="3">
    <location>
        <begin position="43"/>
        <end position="75"/>
    </location>
</feature>
<feature type="coiled-coil region" evidence="3">
    <location>
        <begin position="126"/>
        <end position="158"/>
    </location>
</feature>
<feature type="coiled-coil region" evidence="3">
    <location>
        <begin position="240"/>
        <end position="350"/>
    </location>
</feature>
<feature type="compositionally biased region" description="Polar residues" evidence="4">
    <location>
        <begin position="39"/>
        <end position="48"/>
    </location>
</feature>
<feature type="compositionally biased region" description="Basic and acidic residues" evidence="4">
    <location>
        <begin position="102"/>
        <end position="111"/>
    </location>
</feature>
<feature type="modified residue" description="Phosphoserine" evidence="2">
    <location>
        <position position="23"/>
    </location>
</feature>
<feature type="modified residue" description="Phosphoserine" evidence="2">
    <location>
        <position position="25"/>
    </location>
</feature>
<feature type="modified residue" description="Phosphoserine" evidence="1">
    <location>
        <position position="27"/>
    </location>
</feature>
<feature type="modified residue" description="Phosphoserine; by PKG" evidence="2">
    <location>
        <position position="104"/>
    </location>
</feature>
<accession>Q32LE2</accession>
<gene>
    <name type="primary">GKAP1</name>
</gene>
<keyword id="KW-0175">Coiled coil</keyword>
<keyword id="KW-0333">Golgi apparatus</keyword>
<keyword id="KW-0597">Phosphoprotein</keyword>
<keyword id="KW-1185">Reference proteome</keyword>
<proteinExistence type="evidence at transcript level"/>
<reference key="1">
    <citation type="submission" date="2005-11" db="EMBL/GenBank/DDBJ databases">
        <authorList>
            <consortium name="NIH - Mammalian Gene Collection (MGC) project"/>
        </authorList>
    </citation>
    <scope>NUCLEOTIDE SEQUENCE [LARGE SCALE MRNA]</scope>
    <source>
        <strain>Crossbred X Angus</strain>
        <tissue>Liver</tissue>
    </source>
</reference>
<dbReference type="EMBL" id="BC109625">
    <property type="protein sequence ID" value="AAI09626.1"/>
    <property type="status" value="ALT_FRAME"/>
    <property type="molecule type" value="mRNA"/>
</dbReference>
<dbReference type="RefSeq" id="NP_001035663.2">
    <property type="nucleotide sequence ID" value="NM_001040573.3"/>
</dbReference>
<dbReference type="RefSeq" id="XP_059745218.1">
    <property type="nucleotide sequence ID" value="XM_059889235.1"/>
</dbReference>
<dbReference type="SMR" id="Q32LE2"/>
<dbReference type="FunCoup" id="Q32LE2">
    <property type="interactions" value="762"/>
</dbReference>
<dbReference type="STRING" id="9913.ENSBTAP00000070991"/>
<dbReference type="PaxDb" id="9913-ENSBTAP00000012912"/>
<dbReference type="Ensembl" id="ENSBTAT00000081827.2">
    <property type="protein sequence ID" value="ENSBTAP00000070991.1"/>
    <property type="gene ID" value="ENSBTAG00000023523.6"/>
</dbReference>
<dbReference type="GeneID" id="613960"/>
<dbReference type="KEGG" id="bta:613960"/>
<dbReference type="CTD" id="80318"/>
<dbReference type="VEuPathDB" id="HostDB:ENSBTAG00000023523"/>
<dbReference type="VGNC" id="VGNC:29387">
    <property type="gene designation" value="GKAP1"/>
</dbReference>
<dbReference type="eggNOG" id="ENOG502QUT6">
    <property type="taxonomic scope" value="Eukaryota"/>
</dbReference>
<dbReference type="GeneTree" id="ENSGT00390000008742"/>
<dbReference type="HOGENOM" id="CLU_065161_1_0_1"/>
<dbReference type="InParanoid" id="Q32LE2"/>
<dbReference type="OMA" id="RKNHQGR"/>
<dbReference type="OrthoDB" id="5864420at2759"/>
<dbReference type="TreeFam" id="TF328459"/>
<dbReference type="Proteomes" id="UP000009136">
    <property type="component" value="Chromosome 8"/>
</dbReference>
<dbReference type="Bgee" id="ENSBTAG00000023523">
    <property type="expression patterns" value="Expressed in spermatid and 105 other cell types or tissues"/>
</dbReference>
<dbReference type="GO" id="GO:0005794">
    <property type="term" value="C:Golgi apparatus"/>
    <property type="evidence" value="ECO:0007669"/>
    <property type="project" value="UniProtKB-SubCell"/>
</dbReference>
<dbReference type="GO" id="GO:0042802">
    <property type="term" value="F:identical protein binding"/>
    <property type="evidence" value="ECO:0007669"/>
    <property type="project" value="Ensembl"/>
</dbReference>
<dbReference type="GO" id="GO:0046628">
    <property type="term" value="P:positive regulation of insulin receptor signaling pathway"/>
    <property type="evidence" value="ECO:0000250"/>
    <property type="project" value="UniProtKB"/>
</dbReference>
<dbReference type="GO" id="GO:0007165">
    <property type="term" value="P:signal transduction"/>
    <property type="evidence" value="ECO:0000318"/>
    <property type="project" value="GO_Central"/>
</dbReference>
<dbReference type="Gene3D" id="1.20.5.170">
    <property type="match status" value="1"/>
</dbReference>
<dbReference type="InterPro" id="IPR026109">
    <property type="entry name" value="GKAP1"/>
</dbReference>
<dbReference type="PANTHER" id="PTHR14899">
    <property type="entry name" value="G KINASE ANCHORING PROTEIN 1"/>
    <property type="match status" value="1"/>
</dbReference>
<dbReference type="PANTHER" id="PTHR14899:SF0">
    <property type="entry name" value="G KINASE-ANCHORING PROTEIN 1"/>
    <property type="match status" value="1"/>
</dbReference>
<dbReference type="PRINTS" id="PR02083">
    <property type="entry name" value="GKINASEAP1"/>
</dbReference>